<organism>
    <name type="scientific">Mycobacterium tuberculosis (strain ATCC 25618 / H37Rv)</name>
    <dbReference type="NCBI Taxonomy" id="83332"/>
    <lineage>
        <taxon>Bacteria</taxon>
        <taxon>Bacillati</taxon>
        <taxon>Actinomycetota</taxon>
        <taxon>Actinomycetes</taxon>
        <taxon>Mycobacteriales</taxon>
        <taxon>Mycobacteriaceae</taxon>
        <taxon>Mycobacterium</taxon>
        <taxon>Mycobacterium tuberculosis complex</taxon>
    </lineage>
</organism>
<accession>P9WPA3</accession>
<accession>L0T8U1</accession>
<accession>O06148</accession>
<accession>P63826</accession>
<comment type="function">
    <text evidence="3 4">Catalyzes the phosphorylation of the 3'-hydroxyl group of dephosphocoenzyme A to form coenzyme A (PubMed:19876400, PubMed:21264299). Can also use dATP, with lower efficiency, but cannot use GTP, dGTP or CTP (PubMed:19876400).</text>
</comment>
<comment type="catalytic activity">
    <reaction evidence="1 3 4">
        <text>3'-dephospho-CoA + ATP = ADP + CoA + H(+)</text>
        <dbReference type="Rhea" id="RHEA:18245"/>
        <dbReference type="ChEBI" id="CHEBI:15378"/>
        <dbReference type="ChEBI" id="CHEBI:30616"/>
        <dbReference type="ChEBI" id="CHEBI:57287"/>
        <dbReference type="ChEBI" id="CHEBI:57328"/>
        <dbReference type="ChEBI" id="CHEBI:456216"/>
        <dbReference type="EC" id="2.7.1.24"/>
    </reaction>
    <physiologicalReaction direction="left-to-right" evidence="3">
        <dbReference type="Rhea" id="RHEA:18246"/>
    </physiologicalReaction>
</comment>
<comment type="activity regulation">
    <text evidence="3 5">Inhibited by CTP (PubMed:19876400, PubMed:21731728). CTP strongly binds the enzyme at a site overlapping that of the leading substrate, dephosphocoenzyme A. Binding of CTP probably prevents interaction with dephosphocoenzyme A and oligomeric transformation to the active form, which limits the catalytic efficiency of the enzyme (PubMed:21731728).</text>
</comment>
<comment type="biophysicochemical properties">
    <kinetics>
        <KM evidence="3">34.9 uM for dephospho-CoA</KM>
        <KM evidence="3">56.8 uM for ATP</KM>
        <KM evidence="3">320 uM for dATP</KM>
        <text evidence="3">kcat is 1.76 min(-1).</text>
    </kinetics>
</comment>
<comment type="pathway">
    <text evidence="1 8">Cofactor biosynthesis; coenzyme A biosynthesis; CoA from (R)-pantothenate: step 5/5.</text>
</comment>
<comment type="subunit">
    <text evidence="5">Forms monomers and homotrimers. The monomer is the active form and the trimeric form is inactive. Shift from inactive homotrimer to active monomer is induced in the presence of dephosphocoenzyme A. A dynamic equilibrium between the trimeric and monomeric forms regulates the effective concentration of active enzyme.</text>
</comment>
<comment type="subcellular location">
    <subcellularLocation>
        <location evidence="1">Cytoplasm</location>
    </subcellularLocation>
</comment>
<comment type="domain">
    <text evidence="3">The C-terminal UPF0157 domain is involved in the proper folding of the full length enzyme.</text>
</comment>
<comment type="miscellaneous">
    <text evidence="2">Was identified as a high-confidence drug target.</text>
</comment>
<comment type="similarity">
    <text evidence="7">In the N-terminal section; belongs to the CoaE family.</text>
</comment>
<comment type="similarity">
    <text evidence="7">In the C-terminal section; belongs to the UPF0157 (GrpB) family.</text>
</comment>
<dbReference type="EC" id="2.7.1.24" evidence="1 3 4"/>
<dbReference type="EMBL" id="AL123456">
    <property type="protein sequence ID" value="CCP44395.1"/>
    <property type="molecule type" value="Genomic_DNA"/>
</dbReference>
<dbReference type="PIR" id="E70559">
    <property type="entry name" value="E70559"/>
</dbReference>
<dbReference type="RefSeq" id="NP_216147.1">
    <property type="nucleotide sequence ID" value="NC_000962.3"/>
</dbReference>
<dbReference type="RefSeq" id="WP_003408069.1">
    <property type="nucleotide sequence ID" value="NZ_NVQJ01000016.1"/>
</dbReference>
<dbReference type="SMR" id="P9WPA3"/>
<dbReference type="FunCoup" id="P9WPA3">
    <property type="interactions" value="132"/>
</dbReference>
<dbReference type="STRING" id="83332.Rv1631"/>
<dbReference type="PaxDb" id="83332-Rv1631"/>
<dbReference type="DNASU" id="885165"/>
<dbReference type="GeneID" id="885165"/>
<dbReference type="KEGG" id="mtu:Rv1631"/>
<dbReference type="KEGG" id="mtv:RVBD_1631"/>
<dbReference type="TubercuList" id="Rv1631"/>
<dbReference type="eggNOG" id="COG0237">
    <property type="taxonomic scope" value="Bacteria"/>
</dbReference>
<dbReference type="eggNOG" id="COG2320">
    <property type="taxonomic scope" value="Bacteria"/>
</dbReference>
<dbReference type="InParanoid" id="P9WPA3"/>
<dbReference type="OrthoDB" id="9812943at2"/>
<dbReference type="BRENDA" id="2.7.1.24">
    <property type="organism ID" value="3445"/>
</dbReference>
<dbReference type="UniPathway" id="UPA00241">
    <property type="reaction ID" value="UER00356"/>
</dbReference>
<dbReference type="Proteomes" id="UP000001584">
    <property type="component" value="Chromosome"/>
</dbReference>
<dbReference type="GO" id="GO:0005829">
    <property type="term" value="C:cytosol"/>
    <property type="evidence" value="ECO:0007005"/>
    <property type="project" value="MTBBASE"/>
</dbReference>
<dbReference type="GO" id="GO:0005524">
    <property type="term" value="F:ATP binding"/>
    <property type="evidence" value="ECO:0007669"/>
    <property type="project" value="UniProtKB-UniRule"/>
</dbReference>
<dbReference type="GO" id="GO:0002135">
    <property type="term" value="F:CTP binding"/>
    <property type="evidence" value="ECO:0000314"/>
    <property type="project" value="MTBBASE"/>
</dbReference>
<dbReference type="GO" id="GO:0032564">
    <property type="term" value="F:dATP binding"/>
    <property type="evidence" value="ECO:0000314"/>
    <property type="project" value="MTBBASE"/>
</dbReference>
<dbReference type="GO" id="GO:0004140">
    <property type="term" value="F:dephospho-CoA kinase activity"/>
    <property type="evidence" value="ECO:0000314"/>
    <property type="project" value="MTBBASE"/>
</dbReference>
<dbReference type="GO" id="GO:0015937">
    <property type="term" value="P:coenzyme A biosynthetic process"/>
    <property type="evidence" value="ECO:0000314"/>
    <property type="project" value="MTBBASE"/>
</dbReference>
<dbReference type="CDD" id="cd02022">
    <property type="entry name" value="DPCK"/>
    <property type="match status" value="1"/>
</dbReference>
<dbReference type="FunFam" id="3.30.460.10:FF:000066">
    <property type="entry name" value="Dephospho-CoA kinase"/>
    <property type="match status" value="1"/>
</dbReference>
<dbReference type="Gene3D" id="3.30.460.10">
    <property type="entry name" value="Beta Polymerase, domain 2"/>
    <property type="match status" value="1"/>
</dbReference>
<dbReference type="Gene3D" id="3.40.50.300">
    <property type="entry name" value="P-loop containing nucleotide triphosphate hydrolases"/>
    <property type="match status" value="1"/>
</dbReference>
<dbReference type="HAMAP" id="MF_00376">
    <property type="entry name" value="Dephospho_CoA_kinase"/>
    <property type="match status" value="1"/>
</dbReference>
<dbReference type="InterPro" id="IPR001977">
    <property type="entry name" value="Depp_CoAkinase"/>
</dbReference>
<dbReference type="InterPro" id="IPR007344">
    <property type="entry name" value="GrpB/CoaE"/>
</dbReference>
<dbReference type="InterPro" id="IPR043519">
    <property type="entry name" value="NT_sf"/>
</dbReference>
<dbReference type="InterPro" id="IPR027417">
    <property type="entry name" value="P-loop_NTPase"/>
</dbReference>
<dbReference type="NCBIfam" id="TIGR00152">
    <property type="entry name" value="dephospho-CoA kinase"/>
    <property type="match status" value="1"/>
</dbReference>
<dbReference type="NCBIfam" id="NF002879">
    <property type="entry name" value="PRK03333.1"/>
    <property type="match status" value="1"/>
</dbReference>
<dbReference type="PANTHER" id="PTHR10695:SF46">
    <property type="entry name" value="BIFUNCTIONAL COENZYME A SYNTHASE-RELATED"/>
    <property type="match status" value="1"/>
</dbReference>
<dbReference type="PANTHER" id="PTHR10695">
    <property type="entry name" value="DEPHOSPHO-COA KINASE-RELATED"/>
    <property type="match status" value="1"/>
</dbReference>
<dbReference type="Pfam" id="PF01121">
    <property type="entry name" value="CoaE"/>
    <property type="match status" value="1"/>
</dbReference>
<dbReference type="Pfam" id="PF04229">
    <property type="entry name" value="GrpB"/>
    <property type="match status" value="1"/>
</dbReference>
<dbReference type="SUPFAM" id="SSF81301">
    <property type="entry name" value="Nucleotidyltransferase"/>
    <property type="match status" value="1"/>
</dbReference>
<dbReference type="SUPFAM" id="SSF52540">
    <property type="entry name" value="P-loop containing nucleoside triphosphate hydrolases"/>
    <property type="match status" value="1"/>
</dbReference>
<dbReference type="PROSITE" id="PS51219">
    <property type="entry name" value="DPCK"/>
    <property type="match status" value="1"/>
</dbReference>
<name>COAE_MYCTU</name>
<reference key="1">
    <citation type="journal article" date="1998" name="Nature">
        <title>Deciphering the biology of Mycobacterium tuberculosis from the complete genome sequence.</title>
        <authorList>
            <person name="Cole S.T."/>
            <person name="Brosch R."/>
            <person name="Parkhill J."/>
            <person name="Garnier T."/>
            <person name="Churcher C.M."/>
            <person name="Harris D.E."/>
            <person name="Gordon S.V."/>
            <person name="Eiglmeier K."/>
            <person name="Gas S."/>
            <person name="Barry C.E. III"/>
            <person name="Tekaia F."/>
            <person name="Badcock K."/>
            <person name="Basham D."/>
            <person name="Brown D."/>
            <person name="Chillingworth T."/>
            <person name="Connor R."/>
            <person name="Davies R.M."/>
            <person name="Devlin K."/>
            <person name="Feltwell T."/>
            <person name="Gentles S."/>
            <person name="Hamlin N."/>
            <person name="Holroyd S."/>
            <person name="Hornsby T."/>
            <person name="Jagels K."/>
            <person name="Krogh A."/>
            <person name="McLean J."/>
            <person name="Moule S."/>
            <person name="Murphy L.D."/>
            <person name="Oliver S."/>
            <person name="Osborne J."/>
            <person name="Quail M.A."/>
            <person name="Rajandream M.A."/>
            <person name="Rogers J."/>
            <person name="Rutter S."/>
            <person name="Seeger K."/>
            <person name="Skelton S."/>
            <person name="Squares S."/>
            <person name="Squares R."/>
            <person name="Sulston J.E."/>
            <person name="Taylor K."/>
            <person name="Whitehead S."/>
            <person name="Barrell B.G."/>
        </authorList>
    </citation>
    <scope>NUCLEOTIDE SEQUENCE [LARGE SCALE GENOMIC DNA]</scope>
    <source>
        <strain>ATCC 25618 / H37Rv</strain>
    </source>
</reference>
<reference key="2">
    <citation type="journal article" date="2008" name="BMC Syst. Biol.">
        <title>targetTB: a target identification pipeline for Mycobacterium tuberculosis through an interactome, reactome and genome-scale structural analysis.</title>
        <authorList>
            <person name="Raman K."/>
            <person name="Yeturu K."/>
            <person name="Chandra N."/>
        </authorList>
    </citation>
    <scope>IDENTIFICATION AS A DRUG TARGET [LARGE SCALE ANALYSIS]</scope>
</reference>
<reference key="3">
    <citation type="journal article" date="2009" name="PLoS ONE">
        <title>The role of UPF0157 in the folding of M. tuberculosis dephosphocoenzyme A kinase and the regulation of the latter by CTP.</title>
        <authorList>
            <person name="Walia G."/>
            <person name="Kumar P."/>
            <person name="Surolia A."/>
        </authorList>
    </citation>
    <scope>FUNCTION</scope>
    <scope>CATALYTIC ACTIVITY</scope>
    <scope>ACTIVITY REGULATION</scope>
    <scope>BIOPHYSICOCHEMICAL PROPERTIES</scope>
    <scope>PATHWAY</scope>
    <scope>DOMAIN</scope>
</reference>
<reference key="4">
    <citation type="journal article" date="2011" name="Mol. Cell. Proteomics">
        <title>Proteogenomic analysis of Mycobacterium tuberculosis by high resolution mass spectrometry.</title>
        <authorList>
            <person name="Kelkar D.S."/>
            <person name="Kumar D."/>
            <person name="Kumar P."/>
            <person name="Balakrishnan L."/>
            <person name="Muthusamy B."/>
            <person name="Yadav A.K."/>
            <person name="Shrivastava P."/>
            <person name="Marimuthu A."/>
            <person name="Anand S."/>
            <person name="Sundaram H."/>
            <person name="Kingsbury R."/>
            <person name="Harsha H.C."/>
            <person name="Nair B."/>
            <person name="Prasad T.S."/>
            <person name="Chauhan D.S."/>
            <person name="Katoch K."/>
            <person name="Katoch V.M."/>
            <person name="Kumar P."/>
            <person name="Chaerkady R."/>
            <person name="Ramachandran S."/>
            <person name="Dash D."/>
            <person name="Pandey A."/>
        </authorList>
    </citation>
    <scope>IDENTIFICATION BY MASS SPECTROMETRY [LARGE SCALE ANALYSIS]</scope>
    <source>
        <strain>ATCC 25618 / H37Rv</strain>
    </source>
</reference>
<reference key="5">
    <citation type="journal article" date="2011" name="PLoS ONE">
        <title>Identification of critical residues of the mycobacterial dephosphocoenzyme a kinase by site-directed mutagenesis.</title>
        <authorList>
            <person name="Walia G."/>
            <person name="Gajendar K."/>
            <person name="Surolia A."/>
        </authorList>
    </citation>
    <scope>FUNCTION</scope>
    <scope>CATALYTIC ACTIVITY</scope>
    <scope>MUTAGENESIS OF GLY-8; LYS-14; ASP-32; LEU-114 AND ARG-140</scope>
</reference>
<reference key="6">
    <citation type="journal article" date="2011" name="PLoS ONE">
        <title>Insights into the regulatory characteristics of the mycobacterial dephosphocoenzyme A kinase: implications for the universal CoA biosynthesis pathway.</title>
        <authorList>
            <person name="Walia G."/>
            <person name="Surolia A."/>
        </authorList>
    </citation>
    <scope>ACTIVITY REGULATION</scope>
    <scope>SUBUNIT</scope>
    <scope>MUTAGENESIS OF CYS-235 AND CYS-368</scope>
</reference>
<proteinExistence type="evidence at protein level"/>
<feature type="chain" id="PRO_0000172964" description="Dephospho-CoA kinase">
    <location>
        <begin position="1"/>
        <end position="407"/>
    </location>
</feature>
<feature type="domain" description="DPCK" evidence="1">
    <location>
        <begin position="3"/>
        <end position="204"/>
    </location>
</feature>
<feature type="region of interest" description="UPF0157" evidence="7">
    <location>
        <begin position="211"/>
        <end position="407"/>
    </location>
</feature>
<feature type="binding site" evidence="1">
    <location>
        <begin position="11"/>
        <end position="16"/>
    </location>
    <ligand>
        <name>ATP</name>
        <dbReference type="ChEBI" id="CHEBI:30616"/>
    </ligand>
</feature>
<feature type="mutagenesis site" description="Does not change either the Km or the kcat of the reaction considerably." evidence="4">
    <original>G</original>
    <variation>A</variation>
    <location>
        <position position="8"/>
    </location>
</feature>
<feature type="mutagenesis site" description="Shows a 50% increase in the Km for ATP and a 19% reduction in kcat." evidence="4">
    <original>K</original>
    <variation>A</variation>
    <location>
        <position position="14"/>
    </location>
</feature>
<feature type="mutagenesis site" description="Does not affect Km for ATP, but shows a 15-fold increase in the Km for dephospho-CoA. Decrease in kcat and strong decrease in catalytic efficiency." evidence="4">
    <original>D</original>
    <variation>A</variation>
    <location>
        <position position="32"/>
    </location>
</feature>
<feature type="mutagenesis site" description="Decreases Km for both ATP and dephospho-CoA. Has minimal effect on kcat." evidence="4">
    <original>D</original>
    <variation>E</variation>
    <location>
        <position position="32"/>
    </location>
</feature>
<feature type="mutagenesis site" description="Does not affect Km for ATP, but shows a 2.5-fold increase in the Km for dephospho-CoA." evidence="4">
    <original>D</original>
    <variation>N</variation>
    <location>
        <position position="32"/>
    </location>
</feature>
<feature type="mutagenesis site" description="Increases Km for both ATP and dephospho-CoA, but increases the enzymatic turnover." evidence="4">
    <original>L</original>
    <variation>A</variation>
    <location>
        <position position="114"/>
    </location>
</feature>
<feature type="mutagenesis site" description="Loss of activity." evidence="4">
    <original>R</original>
    <variation>A</variation>
    <location>
        <position position="140"/>
    </location>
</feature>
<feature type="mutagenesis site" description="Almost loss of activity. Shows very poor binding to ATP." evidence="4">
    <original>R</original>
    <variation>K</variation>
    <location>
        <position position="140"/>
    </location>
</feature>
<feature type="mutagenesis site" description="Does not affect oligomerization." evidence="5">
    <original>C</original>
    <variation>S</variation>
    <location>
        <position position="235"/>
    </location>
</feature>
<feature type="mutagenesis site" description="Does not affect oligomerization." evidence="5">
    <original>C</original>
    <variation>S</variation>
    <location>
        <position position="368"/>
    </location>
</feature>
<keyword id="KW-0067">ATP-binding</keyword>
<keyword id="KW-0173">Coenzyme A biosynthesis</keyword>
<keyword id="KW-0963">Cytoplasm</keyword>
<keyword id="KW-0418">Kinase</keyword>
<keyword id="KW-0547">Nucleotide-binding</keyword>
<keyword id="KW-1185">Reference proteome</keyword>
<keyword id="KW-0808">Transferase</keyword>
<gene>
    <name evidence="1 6" type="primary">coaE</name>
    <name type="ordered locus">Rv1631</name>
    <name type="ORF">MTCY01B2.23</name>
</gene>
<protein>
    <recommendedName>
        <fullName evidence="1">Dephospho-CoA kinase</fullName>
        <ecNumber evidence="1 3 4">2.7.1.24</ecNumber>
    </recommendedName>
    <alternativeName>
        <fullName evidence="1 6">Dephosphocoenzyme A kinase</fullName>
    </alternativeName>
</protein>
<evidence type="ECO:0000255" key="1">
    <source>
        <dbReference type="HAMAP-Rule" id="MF_00376"/>
    </source>
</evidence>
<evidence type="ECO:0000269" key="2">
    <source>
    </source>
</evidence>
<evidence type="ECO:0000269" key="3">
    <source>
    </source>
</evidence>
<evidence type="ECO:0000269" key="4">
    <source>
    </source>
</evidence>
<evidence type="ECO:0000269" key="5">
    <source>
    </source>
</evidence>
<evidence type="ECO:0000303" key="6">
    <source>
    </source>
</evidence>
<evidence type="ECO:0000305" key="7"/>
<evidence type="ECO:0000305" key="8">
    <source>
    </source>
</evidence>
<sequence length="407" mass="44669">MLRIGLTGGIGAGKSLLSTTFSQCGGIVVDGDVLAREVVQPGTEGLASLVDAFGRDILLADGALDRQALAAKAFRDDESRGVLNGIVHPLVARRRSEIIAAVSGDAVVVEDIPLLVESGMAPLFPLVVVVHADVELRVRRLVEQRGMAEADARARIAAQASDQQRRAVADVWLDNSGSPEDLVRRARDVWNTRVQPFAHNLAQRQIARAPARLVPADPSWPDQARRIVNRLKIACGHKALRVDHIGSTAVSGFPDFLAKDVIDIQVTVESLDVADELAEPLLAAGYPRLEHITQDTEKTDARSTVGRYDHTDSAALWHKRVHASADPGRPTNVHLRVHGWPNQQFALLFVDWLAANPGAREDYLTVKCDADRRADGELARYVTAKEPWFLDAYQRAWEWADAVHWRP</sequence>